<comment type="function">
    <text evidence="1">NDH-1 shuttles electrons from NADH, via FMN and iron-sulfur (Fe-S) centers, to quinones in the respiratory chain. The immediate electron acceptor for the enzyme in this species is believed to be ubiquinone. Couples the redox reaction to proton translocation (for every two electrons transferred, four hydrogen ions are translocated across the cytoplasmic membrane), and thus conserves the redox energy in a proton gradient.</text>
</comment>
<comment type="catalytic activity">
    <reaction evidence="1">
        <text>a quinone + NADH + 5 H(+)(in) = a quinol + NAD(+) + 4 H(+)(out)</text>
        <dbReference type="Rhea" id="RHEA:57888"/>
        <dbReference type="ChEBI" id="CHEBI:15378"/>
        <dbReference type="ChEBI" id="CHEBI:24646"/>
        <dbReference type="ChEBI" id="CHEBI:57540"/>
        <dbReference type="ChEBI" id="CHEBI:57945"/>
        <dbReference type="ChEBI" id="CHEBI:132124"/>
    </reaction>
</comment>
<comment type="cofactor">
    <cofactor evidence="1">
        <name>[4Fe-4S] cluster</name>
        <dbReference type="ChEBI" id="CHEBI:49883"/>
    </cofactor>
    <text evidence="1">Binds 2 [4Fe-4S] clusters per subunit.</text>
</comment>
<comment type="subunit">
    <text evidence="1">NDH-1 is composed of 14 different subunits. Subunits NuoA, H, J, K, L, M, N constitute the membrane sector of the complex.</text>
</comment>
<comment type="subcellular location">
    <subcellularLocation>
        <location evidence="1">Cell inner membrane</location>
        <topology evidence="1">Peripheral membrane protein</topology>
    </subcellularLocation>
</comment>
<comment type="similarity">
    <text evidence="1">Belongs to the complex I 23 kDa subunit family.</text>
</comment>
<keyword id="KW-0004">4Fe-4S</keyword>
<keyword id="KW-0997">Cell inner membrane</keyword>
<keyword id="KW-1003">Cell membrane</keyword>
<keyword id="KW-0408">Iron</keyword>
<keyword id="KW-0411">Iron-sulfur</keyword>
<keyword id="KW-0472">Membrane</keyword>
<keyword id="KW-0479">Metal-binding</keyword>
<keyword id="KW-0520">NAD</keyword>
<keyword id="KW-0874">Quinone</keyword>
<keyword id="KW-1185">Reference proteome</keyword>
<keyword id="KW-0677">Repeat</keyword>
<keyword id="KW-1278">Translocase</keyword>
<keyword id="KW-0830">Ubiquinone</keyword>
<sequence length="164" mass="19056">MGNAMKQLMASLALRELWQGMAVTLRYMFRPNITIQYPEERTPYSPRFRGIHVLRRYEGGEERCVACKLCEAICPAQAIYIEIDTESRADKRLTKVYDIDLFKCIYCGLCEEACPVEAIVMGPYLDMAYEDRNARFYKKDQLLANGESWRAEIDARLNADAKYR</sequence>
<feature type="chain" id="PRO_0000298507" description="NADH-quinone oxidoreductase subunit I">
    <location>
        <begin position="1"/>
        <end position="164"/>
    </location>
</feature>
<feature type="domain" description="4Fe-4S ferredoxin-type 1" evidence="1">
    <location>
        <begin position="55"/>
        <end position="84"/>
    </location>
</feature>
<feature type="domain" description="4Fe-4S ferredoxin-type 2" evidence="1">
    <location>
        <begin position="95"/>
        <end position="124"/>
    </location>
</feature>
<feature type="binding site" evidence="1">
    <location>
        <position position="64"/>
    </location>
    <ligand>
        <name>[4Fe-4S] cluster</name>
        <dbReference type="ChEBI" id="CHEBI:49883"/>
        <label>1</label>
    </ligand>
</feature>
<feature type="binding site" evidence="1">
    <location>
        <position position="67"/>
    </location>
    <ligand>
        <name>[4Fe-4S] cluster</name>
        <dbReference type="ChEBI" id="CHEBI:49883"/>
        <label>1</label>
    </ligand>
</feature>
<feature type="binding site" evidence="1">
    <location>
        <position position="70"/>
    </location>
    <ligand>
        <name>[4Fe-4S] cluster</name>
        <dbReference type="ChEBI" id="CHEBI:49883"/>
        <label>1</label>
    </ligand>
</feature>
<feature type="binding site" evidence="1">
    <location>
        <position position="74"/>
    </location>
    <ligand>
        <name>[4Fe-4S] cluster</name>
        <dbReference type="ChEBI" id="CHEBI:49883"/>
        <label>2</label>
    </ligand>
</feature>
<feature type="binding site" evidence="1">
    <location>
        <position position="104"/>
    </location>
    <ligand>
        <name>[4Fe-4S] cluster</name>
        <dbReference type="ChEBI" id="CHEBI:49883"/>
        <label>2</label>
    </ligand>
</feature>
<feature type="binding site" evidence="1">
    <location>
        <position position="107"/>
    </location>
    <ligand>
        <name>[4Fe-4S] cluster</name>
        <dbReference type="ChEBI" id="CHEBI:49883"/>
        <label>2</label>
    </ligand>
</feature>
<feature type="binding site" evidence="1">
    <location>
        <position position="110"/>
    </location>
    <ligand>
        <name>[4Fe-4S] cluster</name>
        <dbReference type="ChEBI" id="CHEBI:49883"/>
        <label>2</label>
    </ligand>
</feature>
<feature type="binding site" evidence="1">
    <location>
        <position position="114"/>
    </location>
    <ligand>
        <name>[4Fe-4S] cluster</name>
        <dbReference type="ChEBI" id="CHEBI:49883"/>
        <label>1</label>
    </ligand>
</feature>
<accession>A0LDR9</accession>
<gene>
    <name evidence="1" type="primary">nuoI</name>
    <name type="ordered locus">Mmc1_3627</name>
</gene>
<organism>
    <name type="scientific">Magnetococcus marinus (strain ATCC BAA-1437 / JCM 17883 / MC-1)</name>
    <dbReference type="NCBI Taxonomy" id="156889"/>
    <lineage>
        <taxon>Bacteria</taxon>
        <taxon>Pseudomonadati</taxon>
        <taxon>Pseudomonadota</taxon>
        <taxon>Alphaproteobacteria</taxon>
        <taxon>Magnetococcales</taxon>
        <taxon>Magnetococcaceae</taxon>
        <taxon>Magnetococcus</taxon>
    </lineage>
</organism>
<name>NUOI_MAGMM</name>
<evidence type="ECO:0000255" key="1">
    <source>
        <dbReference type="HAMAP-Rule" id="MF_01351"/>
    </source>
</evidence>
<proteinExistence type="inferred from homology"/>
<dbReference type="EC" id="7.1.1.-" evidence="1"/>
<dbReference type="EMBL" id="CP000471">
    <property type="protein sequence ID" value="ABK46112.1"/>
    <property type="molecule type" value="Genomic_DNA"/>
</dbReference>
<dbReference type="RefSeq" id="WP_011715166.1">
    <property type="nucleotide sequence ID" value="NC_008576.1"/>
</dbReference>
<dbReference type="SMR" id="A0LDR9"/>
<dbReference type="STRING" id="156889.Mmc1_3627"/>
<dbReference type="KEGG" id="mgm:Mmc1_3627"/>
<dbReference type="eggNOG" id="COG1143">
    <property type="taxonomic scope" value="Bacteria"/>
</dbReference>
<dbReference type="HOGENOM" id="CLU_067218_5_1_5"/>
<dbReference type="Proteomes" id="UP000002586">
    <property type="component" value="Chromosome"/>
</dbReference>
<dbReference type="GO" id="GO:0005886">
    <property type="term" value="C:plasma membrane"/>
    <property type="evidence" value="ECO:0007669"/>
    <property type="project" value="UniProtKB-SubCell"/>
</dbReference>
<dbReference type="GO" id="GO:0051539">
    <property type="term" value="F:4 iron, 4 sulfur cluster binding"/>
    <property type="evidence" value="ECO:0007669"/>
    <property type="project" value="UniProtKB-KW"/>
</dbReference>
<dbReference type="GO" id="GO:0005506">
    <property type="term" value="F:iron ion binding"/>
    <property type="evidence" value="ECO:0007669"/>
    <property type="project" value="UniProtKB-UniRule"/>
</dbReference>
<dbReference type="GO" id="GO:0050136">
    <property type="term" value="F:NADH:ubiquinone reductase (non-electrogenic) activity"/>
    <property type="evidence" value="ECO:0007669"/>
    <property type="project" value="UniProtKB-UniRule"/>
</dbReference>
<dbReference type="GO" id="GO:0048038">
    <property type="term" value="F:quinone binding"/>
    <property type="evidence" value="ECO:0007669"/>
    <property type="project" value="UniProtKB-KW"/>
</dbReference>
<dbReference type="GO" id="GO:0009060">
    <property type="term" value="P:aerobic respiration"/>
    <property type="evidence" value="ECO:0007669"/>
    <property type="project" value="TreeGrafter"/>
</dbReference>
<dbReference type="Gene3D" id="3.30.70.3270">
    <property type="match status" value="1"/>
</dbReference>
<dbReference type="HAMAP" id="MF_01351">
    <property type="entry name" value="NDH1_NuoI"/>
    <property type="match status" value="1"/>
</dbReference>
<dbReference type="InterPro" id="IPR017896">
    <property type="entry name" value="4Fe4S_Fe-S-bd"/>
</dbReference>
<dbReference type="InterPro" id="IPR017900">
    <property type="entry name" value="4Fe4S_Fe_S_CS"/>
</dbReference>
<dbReference type="InterPro" id="IPR010226">
    <property type="entry name" value="NADH_quinone_OxRdtase_chainI"/>
</dbReference>
<dbReference type="NCBIfam" id="TIGR01971">
    <property type="entry name" value="NuoI"/>
    <property type="match status" value="1"/>
</dbReference>
<dbReference type="NCBIfam" id="NF004538">
    <property type="entry name" value="PRK05888.1-4"/>
    <property type="match status" value="1"/>
</dbReference>
<dbReference type="NCBIfam" id="NF004539">
    <property type="entry name" value="PRK05888.1-5"/>
    <property type="match status" value="1"/>
</dbReference>
<dbReference type="PANTHER" id="PTHR10849:SF20">
    <property type="entry name" value="NADH DEHYDROGENASE [UBIQUINONE] IRON-SULFUR PROTEIN 8, MITOCHONDRIAL"/>
    <property type="match status" value="1"/>
</dbReference>
<dbReference type="PANTHER" id="PTHR10849">
    <property type="entry name" value="NADH DEHYDROGENASE UBIQUINONE IRON-SULFUR PROTEIN 8, MITOCHONDRIAL"/>
    <property type="match status" value="1"/>
</dbReference>
<dbReference type="Pfam" id="PF12838">
    <property type="entry name" value="Fer4_7"/>
    <property type="match status" value="1"/>
</dbReference>
<dbReference type="SUPFAM" id="SSF54862">
    <property type="entry name" value="4Fe-4S ferredoxins"/>
    <property type="match status" value="1"/>
</dbReference>
<dbReference type="PROSITE" id="PS00198">
    <property type="entry name" value="4FE4S_FER_1"/>
    <property type="match status" value="2"/>
</dbReference>
<dbReference type="PROSITE" id="PS51379">
    <property type="entry name" value="4FE4S_FER_2"/>
    <property type="match status" value="2"/>
</dbReference>
<reference key="1">
    <citation type="journal article" date="2009" name="Appl. Environ. Microbiol.">
        <title>Complete genome sequence of the chemolithoautotrophic marine magnetotactic coccus strain MC-1.</title>
        <authorList>
            <person name="Schubbe S."/>
            <person name="Williams T.J."/>
            <person name="Xie G."/>
            <person name="Kiss H.E."/>
            <person name="Brettin T.S."/>
            <person name="Martinez D."/>
            <person name="Ross C.A."/>
            <person name="Schuler D."/>
            <person name="Cox B.L."/>
            <person name="Nealson K.H."/>
            <person name="Bazylinski D.A."/>
        </authorList>
    </citation>
    <scope>NUCLEOTIDE SEQUENCE [LARGE SCALE GENOMIC DNA]</scope>
    <source>
        <strain>ATCC BAA-1437 / JCM 17883 / MC-1</strain>
    </source>
</reference>
<protein>
    <recommendedName>
        <fullName evidence="1">NADH-quinone oxidoreductase subunit I</fullName>
        <ecNumber evidence="1">7.1.1.-</ecNumber>
    </recommendedName>
    <alternativeName>
        <fullName evidence="1">NADH dehydrogenase I subunit I</fullName>
    </alternativeName>
    <alternativeName>
        <fullName evidence="1">NDH-1 subunit I</fullName>
    </alternativeName>
</protein>